<feature type="chain" id="PRO_1000098819" description="Protease HtpX">
    <location>
        <begin position="1"/>
        <end position="293"/>
    </location>
</feature>
<feature type="transmembrane region" description="Helical" evidence="1">
    <location>
        <begin position="4"/>
        <end position="24"/>
    </location>
</feature>
<feature type="transmembrane region" description="Helical" evidence="1">
    <location>
        <begin position="32"/>
        <end position="52"/>
    </location>
</feature>
<feature type="transmembrane region" description="Helical" evidence="1">
    <location>
        <begin position="158"/>
        <end position="178"/>
    </location>
</feature>
<feature type="transmembrane region" description="Helical" evidence="1">
    <location>
        <begin position="193"/>
        <end position="213"/>
    </location>
</feature>
<feature type="active site" evidence="1">
    <location>
        <position position="140"/>
    </location>
</feature>
<feature type="binding site" evidence="1">
    <location>
        <position position="139"/>
    </location>
    <ligand>
        <name>Zn(2+)</name>
        <dbReference type="ChEBI" id="CHEBI:29105"/>
        <note>catalytic</note>
    </ligand>
</feature>
<feature type="binding site" evidence="1">
    <location>
        <position position="143"/>
    </location>
    <ligand>
        <name>Zn(2+)</name>
        <dbReference type="ChEBI" id="CHEBI:29105"/>
        <note>catalytic</note>
    </ligand>
</feature>
<feature type="binding site" evidence="1">
    <location>
        <position position="222"/>
    </location>
    <ligand>
        <name>Zn(2+)</name>
        <dbReference type="ChEBI" id="CHEBI:29105"/>
        <note>catalytic</note>
    </ligand>
</feature>
<sequence length="293" mass="31842">MMRIALFLLTNLGVMVVFGLILSLTGIQSSSVMGLMIMAGLFGFGGAFVSLLMSKWMALRSVGGEVIEQPRNETERWLLDTIAKQSQQAGIAMPQVAIYHAPDINAFATGARRDASLVAVSTGLLQNMSRDEAEAVLAHEVSHIANGDMVTMTLIQGIVNTFVIFISRILAQLAAGFMSGDREEEGNSNGNPMVYFVVSMVLELVFGIVASTITMWFSRHREFHADAGAARLAGSEKMIAALQRLKTSYEPQEASSMMALCINGKSKSISELFMSHPPLDKRIEALRSGQYAR</sequence>
<reference key="1">
    <citation type="journal article" date="2008" name="Environ. Microbiol.">
        <title>The genome of Erwinia tasmaniensis strain Et1/99, a non-pathogenic bacterium in the genus Erwinia.</title>
        <authorList>
            <person name="Kube M."/>
            <person name="Migdoll A.M."/>
            <person name="Mueller I."/>
            <person name="Kuhl H."/>
            <person name="Beck A."/>
            <person name="Reinhardt R."/>
            <person name="Geider K."/>
        </authorList>
    </citation>
    <scope>NUCLEOTIDE SEQUENCE [LARGE SCALE GENOMIC DNA]</scope>
    <source>
        <strain>DSM 17950 / CFBP 7177 / CIP 109463 / NCPPB 4357 / Et1/99</strain>
    </source>
</reference>
<keyword id="KW-0997">Cell inner membrane</keyword>
<keyword id="KW-1003">Cell membrane</keyword>
<keyword id="KW-0378">Hydrolase</keyword>
<keyword id="KW-0472">Membrane</keyword>
<keyword id="KW-0479">Metal-binding</keyword>
<keyword id="KW-0482">Metalloprotease</keyword>
<keyword id="KW-0645">Protease</keyword>
<keyword id="KW-1185">Reference proteome</keyword>
<keyword id="KW-0812">Transmembrane</keyword>
<keyword id="KW-1133">Transmembrane helix</keyword>
<keyword id="KW-0862">Zinc</keyword>
<name>HTPX_ERWT9</name>
<evidence type="ECO:0000255" key="1">
    <source>
        <dbReference type="HAMAP-Rule" id="MF_00188"/>
    </source>
</evidence>
<gene>
    <name evidence="1" type="primary">htpX</name>
    <name type="ordered locus">ETA_15170</name>
</gene>
<accession>B2VJ57</accession>
<proteinExistence type="inferred from homology"/>
<dbReference type="EC" id="3.4.24.-" evidence="1"/>
<dbReference type="EMBL" id="CU468135">
    <property type="protein sequence ID" value="CAO96563.1"/>
    <property type="molecule type" value="Genomic_DNA"/>
</dbReference>
<dbReference type="RefSeq" id="WP_012441257.1">
    <property type="nucleotide sequence ID" value="NC_010694.1"/>
</dbReference>
<dbReference type="SMR" id="B2VJ57"/>
<dbReference type="STRING" id="465817.ETA_15170"/>
<dbReference type="MEROPS" id="M48.002"/>
<dbReference type="KEGG" id="eta:ETA_15170"/>
<dbReference type="eggNOG" id="COG0501">
    <property type="taxonomic scope" value="Bacteria"/>
</dbReference>
<dbReference type="HOGENOM" id="CLU_042266_1_0_6"/>
<dbReference type="OrthoDB" id="15218at2"/>
<dbReference type="Proteomes" id="UP000001726">
    <property type="component" value="Chromosome"/>
</dbReference>
<dbReference type="GO" id="GO:0005886">
    <property type="term" value="C:plasma membrane"/>
    <property type="evidence" value="ECO:0007669"/>
    <property type="project" value="UniProtKB-SubCell"/>
</dbReference>
<dbReference type="GO" id="GO:0004222">
    <property type="term" value="F:metalloendopeptidase activity"/>
    <property type="evidence" value="ECO:0007669"/>
    <property type="project" value="UniProtKB-UniRule"/>
</dbReference>
<dbReference type="GO" id="GO:0008270">
    <property type="term" value="F:zinc ion binding"/>
    <property type="evidence" value="ECO:0007669"/>
    <property type="project" value="UniProtKB-UniRule"/>
</dbReference>
<dbReference type="GO" id="GO:0006508">
    <property type="term" value="P:proteolysis"/>
    <property type="evidence" value="ECO:0007669"/>
    <property type="project" value="UniProtKB-KW"/>
</dbReference>
<dbReference type="CDD" id="cd07335">
    <property type="entry name" value="M48B_HtpX_like"/>
    <property type="match status" value="1"/>
</dbReference>
<dbReference type="FunFam" id="3.30.2010.10:FF:000001">
    <property type="entry name" value="Protease HtpX"/>
    <property type="match status" value="1"/>
</dbReference>
<dbReference type="Gene3D" id="3.30.2010.10">
    <property type="entry name" value="Metalloproteases ('zincins'), catalytic domain"/>
    <property type="match status" value="1"/>
</dbReference>
<dbReference type="HAMAP" id="MF_00188">
    <property type="entry name" value="Pept_M48_protease_HtpX"/>
    <property type="match status" value="1"/>
</dbReference>
<dbReference type="InterPro" id="IPR050083">
    <property type="entry name" value="HtpX_protease"/>
</dbReference>
<dbReference type="InterPro" id="IPR022919">
    <property type="entry name" value="Pept_M48_protease_HtpX"/>
</dbReference>
<dbReference type="InterPro" id="IPR001915">
    <property type="entry name" value="Peptidase_M48"/>
</dbReference>
<dbReference type="NCBIfam" id="NF003965">
    <property type="entry name" value="PRK05457.1"/>
    <property type="match status" value="1"/>
</dbReference>
<dbReference type="PANTHER" id="PTHR43221">
    <property type="entry name" value="PROTEASE HTPX"/>
    <property type="match status" value="1"/>
</dbReference>
<dbReference type="PANTHER" id="PTHR43221:SF1">
    <property type="entry name" value="PROTEASE HTPX"/>
    <property type="match status" value="1"/>
</dbReference>
<dbReference type="Pfam" id="PF01435">
    <property type="entry name" value="Peptidase_M48"/>
    <property type="match status" value="1"/>
</dbReference>
<comment type="cofactor">
    <cofactor evidence="1">
        <name>Zn(2+)</name>
        <dbReference type="ChEBI" id="CHEBI:29105"/>
    </cofactor>
    <text evidence="1">Binds 1 zinc ion per subunit.</text>
</comment>
<comment type="subcellular location">
    <subcellularLocation>
        <location evidence="1">Cell inner membrane</location>
        <topology evidence="1">Multi-pass membrane protein</topology>
    </subcellularLocation>
</comment>
<comment type="similarity">
    <text evidence="1">Belongs to the peptidase M48B family.</text>
</comment>
<organism>
    <name type="scientific">Erwinia tasmaniensis (strain DSM 17950 / CFBP 7177 / CIP 109463 / NCPPB 4357 / Et1/99)</name>
    <dbReference type="NCBI Taxonomy" id="465817"/>
    <lineage>
        <taxon>Bacteria</taxon>
        <taxon>Pseudomonadati</taxon>
        <taxon>Pseudomonadota</taxon>
        <taxon>Gammaproteobacteria</taxon>
        <taxon>Enterobacterales</taxon>
        <taxon>Erwiniaceae</taxon>
        <taxon>Erwinia</taxon>
    </lineage>
</organism>
<protein>
    <recommendedName>
        <fullName evidence="1">Protease HtpX</fullName>
        <ecNumber evidence="1">3.4.24.-</ecNumber>
    </recommendedName>
    <alternativeName>
        <fullName evidence="1">Heat shock protein HtpX</fullName>
    </alternativeName>
</protein>